<evidence type="ECO:0000255" key="1">
    <source>
        <dbReference type="HAMAP-Rule" id="MF_01220"/>
    </source>
</evidence>
<evidence type="ECO:0007829" key="2">
    <source>
        <dbReference type="PDB" id="1Z9D"/>
    </source>
</evidence>
<protein>
    <recommendedName>
        <fullName evidence="1">Uridylate kinase</fullName>
        <shortName evidence="1">UK</shortName>
        <ecNumber evidence="1">2.7.4.22</ecNumber>
    </recommendedName>
    <alternativeName>
        <fullName evidence="1">Uridine monophosphate kinase</fullName>
        <shortName evidence="1">UMP kinase</shortName>
        <shortName evidence="1">UMPK</shortName>
    </alternativeName>
</protein>
<sequence length="242" mass="25896">MEPKYQRILIKLSGEALAGEKGVGIDIPTVQAIAKEIAEVHVSGVQIALVIGGGNLWRGEPAADAGMDRVQADYTGMLGTVMNALVMADSLQHYGVDTRVQTAIPMQNVAEPYIRGRALRHLEKNRIVVFGAGIGSPYFSTDTTAALRAAEIEADAILMAKNGVDGVYNADPKKDANAVKFDELTHGEVIKRGLKIMDATASTLSMDNDIDLVVFNMNEAGNIQRVVFGEHIGTTVSNKVCD</sequence>
<reference key="1">
    <citation type="journal article" date="2001" name="Proc. Natl. Acad. Sci. U.S.A.">
        <title>Complete genome sequence of an M1 strain of Streptococcus pyogenes.</title>
        <authorList>
            <person name="Ferretti J.J."/>
            <person name="McShan W.M."/>
            <person name="Ajdic D.J."/>
            <person name="Savic D.J."/>
            <person name="Savic G."/>
            <person name="Lyon K."/>
            <person name="Primeaux C."/>
            <person name="Sezate S."/>
            <person name="Suvorov A.N."/>
            <person name="Kenton S."/>
            <person name="Lai H.S."/>
            <person name="Lin S.P."/>
            <person name="Qian Y."/>
            <person name="Jia H.G."/>
            <person name="Najar F.Z."/>
            <person name="Ren Q."/>
            <person name="Zhu H."/>
            <person name="Song L."/>
            <person name="White J."/>
            <person name="Yuan X."/>
            <person name="Clifton S.W."/>
            <person name="Roe B.A."/>
            <person name="McLaughlin R.E."/>
        </authorList>
    </citation>
    <scope>NUCLEOTIDE SEQUENCE [LARGE SCALE GENOMIC DNA]</scope>
    <source>
        <strain>ATCC 700294 / SF370 / Serotype M1</strain>
    </source>
</reference>
<reference key="2">
    <citation type="journal article" date="2005" name="J. Infect. Dis.">
        <title>Evolutionary origin and emergence of a highly successful clone of serotype M1 group A Streptococcus involved multiple horizontal gene transfer events.</title>
        <authorList>
            <person name="Sumby P."/>
            <person name="Porcella S.F."/>
            <person name="Madrigal A.G."/>
            <person name="Barbian K.D."/>
            <person name="Virtaneva K."/>
            <person name="Ricklefs S.M."/>
            <person name="Sturdevant D.E."/>
            <person name="Graham M.R."/>
            <person name="Vuopio-Varkila J."/>
            <person name="Hoe N.P."/>
            <person name="Musser J.M."/>
        </authorList>
    </citation>
    <scope>NUCLEOTIDE SEQUENCE [LARGE SCALE GENOMIC DNA]</scope>
    <source>
        <strain>ATCC BAA-947 / MGAS5005 / Serotype M1</strain>
    </source>
</reference>
<reference key="3">
    <citation type="submission" date="2014-04" db="EMBL/GenBank/DDBJ databases">
        <authorList>
            <person name="Beres S.B."/>
            <person name="Musser J.M."/>
        </authorList>
    </citation>
    <scope>SEQUENCE REVISION</scope>
</reference>
<reference key="4">
    <citation type="submission" date="2005-04" db="PDB data bank">
        <title>Crystal structure of a putative uridylate kinase (UMP-kinase) from Streptococcus pyogenes.</title>
        <authorList>
            <consortium name="New York structural genomics research consortium (NYSGRC)"/>
        </authorList>
    </citation>
    <scope>X-RAY CRYSTALLOGRAPHY (2.8 ANGSTROMS) OF 2-242</scope>
</reference>
<accession>P65938</accession>
<accession>P59007</accession>
<accession>Q490H1</accession>
<accession>Q490H2</accession>
<accession>Q490H3</accession>
<accession>Q9A151</accession>
<proteinExistence type="evidence at protein level"/>
<name>PYRH_STRP1</name>
<dbReference type="EC" id="2.7.4.22" evidence="1"/>
<dbReference type="EMBL" id="AE004092">
    <property type="protein sequence ID" value="AAK33476.1"/>
    <property type="molecule type" value="Genomic_DNA"/>
</dbReference>
<dbReference type="EMBL" id="CP000017">
    <property type="protein sequence ID" value="AAZ50995.2"/>
    <property type="molecule type" value="Genomic_DNA"/>
</dbReference>
<dbReference type="RefSeq" id="NP_268755.1">
    <property type="nucleotide sequence ID" value="NC_002737.2"/>
</dbReference>
<dbReference type="PDB" id="1Z9D">
    <property type="method" value="X-ray"/>
    <property type="resolution" value="2.80 A"/>
    <property type="chains" value="A/B/C=2-242"/>
</dbReference>
<dbReference type="PDBsum" id="1Z9D"/>
<dbReference type="SMR" id="P65938"/>
<dbReference type="PaxDb" id="1314-HKU360_00408"/>
<dbReference type="KEGG" id="spy:SPy_0462"/>
<dbReference type="KEGG" id="spz:M5005_Spy0377"/>
<dbReference type="PATRIC" id="fig|160490.10.peg.390"/>
<dbReference type="HOGENOM" id="CLU_033861_0_0_9"/>
<dbReference type="OMA" id="LMGDKQF"/>
<dbReference type="UniPathway" id="UPA00159">
    <property type="reaction ID" value="UER00275"/>
</dbReference>
<dbReference type="EvolutionaryTrace" id="P65938"/>
<dbReference type="Proteomes" id="UP000000750">
    <property type="component" value="Chromosome"/>
</dbReference>
<dbReference type="GO" id="GO:0005737">
    <property type="term" value="C:cytoplasm"/>
    <property type="evidence" value="ECO:0007669"/>
    <property type="project" value="UniProtKB-SubCell"/>
</dbReference>
<dbReference type="GO" id="GO:0005524">
    <property type="term" value="F:ATP binding"/>
    <property type="evidence" value="ECO:0007669"/>
    <property type="project" value="UniProtKB-KW"/>
</dbReference>
<dbReference type="GO" id="GO:0033862">
    <property type="term" value="F:UMP kinase activity"/>
    <property type="evidence" value="ECO:0007669"/>
    <property type="project" value="UniProtKB-EC"/>
</dbReference>
<dbReference type="GO" id="GO:0044210">
    <property type="term" value="P:'de novo' CTP biosynthetic process"/>
    <property type="evidence" value="ECO:0007669"/>
    <property type="project" value="UniProtKB-UniRule"/>
</dbReference>
<dbReference type="GO" id="GO:0006225">
    <property type="term" value="P:UDP biosynthetic process"/>
    <property type="evidence" value="ECO:0007669"/>
    <property type="project" value="TreeGrafter"/>
</dbReference>
<dbReference type="CDD" id="cd04254">
    <property type="entry name" value="AAK_UMPK-PyrH-Ec"/>
    <property type="match status" value="1"/>
</dbReference>
<dbReference type="FunFam" id="3.40.1160.10:FF:000019">
    <property type="entry name" value="Uridylate kinase"/>
    <property type="match status" value="1"/>
</dbReference>
<dbReference type="Gene3D" id="3.40.1160.10">
    <property type="entry name" value="Acetylglutamate kinase-like"/>
    <property type="match status" value="1"/>
</dbReference>
<dbReference type="HAMAP" id="MF_01220_B">
    <property type="entry name" value="PyrH_B"/>
    <property type="match status" value="1"/>
</dbReference>
<dbReference type="InterPro" id="IPR036393">
    <property type="entry name" value="AceGlu_kinase-like_sf"/>
</dbReference>
<dbReference type="InterPro" id="IPR001048">
    <property type="entry name" value="Asp/Glu/Uridylate_kinase"/>
</dbReference>
<dbReference type="InterPro" id="IPR011817">
    <property type="entry name" value="Uridylate_kinase"/>
</dbReference>
<dbReference type="InterPro" id="IPR015963">
    <property type="entry name" value="Uridylate_kinase_bac"/>
</dbReference>
<dbReference type="NCBIfam" id="TIGR02075">
    <property type="entry name" value="pyrH_bact"/>
    <property type="match status" value="1"/>
</dbReference>
<dbReference type="PANTHER" id="PTHR42833">
    <property type="entry name" value="URIDYLATE KINASE"/>
    <property type="match status" value="1"/>
</dbReference>
<dbReference type="PANTHER" id="PTHR42833:SF4">
    <property type="entry name" value="URIDYLATE KINASE PUMPKIN, CHLOROPLASTIC"/>
    <property type="match status" value="1"/>
</dbReference>
<dbReference type="Pfam" id="PF00696">
    <property type="entry name" value="AA_kinase"/>
    <property type="match status" value="1"/>
</dbReference>
<dbReference type="PIRSF" id="PIRSF005650">
    <property type="entry name" value="Uridylate_kin"/>
    <property type="match status" value="1"/>
</dbReference>
<dbReference type="SUPFAM" id="SSF53633">
    <property type="entry name" value="Carbamate kinase-like"/>
    <property type="match status" value="1"/>
</dbReference>
<feature type="chain" id="PRO_0000143894" description="Uridylate kinase">
    <location>
        <begin position="1"/>
        <end position="242"/>
    </location>
</feature>
<feature type="region of interest" description="Involved in allosteric activation by GTP" evidence="1">
    <location>
        <begin position="19"/>
        <end position="24"/>
    </location>
</feature>
<feature type="binding site" evidence="1">
    <location>
        <begin position="11"/>
        <end position="14"/>
    </location>
    <ligand>
        <name>ATP</name>
        <dbReference type="ChEBI" id="CHEBI:30616"/>
    </ligand>
</feature>
<feature type="binding site" evidence="1">
    <location>
        <position position="53"/>
    </location>
    <ligand>
        <name>UMP</name>
        <dbReference type="ChEBI" id="CHEBI:57865"/>
    </ligand>
</feature>
<feature type="binding site" evidence="1">
    <location>
        <position position="54"/>
    </location>
    <ligand>
        <name>ATP</name>
        <dbReference type="ChEBI" id="CHEBI:30616"/>
    </ligand>
</feature>
<feature type="binding site" evidence="1">
    <location>
        <position position="58"/>
    </location>
    <ligand>
        <name>ATP</name>
        <dbReference type="ChEBI" id="CHEBI:30616"/>
    </ligand>
</feature>
<feature type="binding site" evidence="1">
    <location>
        <position position="73"/>
    </location>
    <ligand>
        <name>UMP</name>
        <dbReference type="ChEBI" id="CHEBI:57865"/>
    </ligand>
</feature>
<feature type="binding site" evidence="1">
    <location>
        <begin position="134"/>
        <end position="141"/>
    </location>
    <ligand>
        <name>UMP</name>
        <dbReference type="ChEBI" id="CHEBI:57865"/>
    </ligand>
</feature>
<feature type="binding site" evidence="1">
    <location>
        <position position="162"/>
    </location>
    <ligand>
        <name>ATP</name>
        <dbReference type="ChEBI" id="CHEBI:30616"/>
    </ligand>
</feature>
<feature type="binding site" evidence="1">
    <location>
        <position position="168"/>
    </location>
    <ligand>
        <name>ATP</name>
        <dbReference type="ChEBI" id="CHEBI:30616"/>
    </ligand>
</feature>
<feature type="binding site" evidence="1">
    <location>
        <position position="171"/>
    </location>
    <ligand>
        <name>ATP</name>
        <dbReference type="ChEBI" id="CHEBI:30616"/>
    </ligand>
</feature>
<feature type="strand" evidence="2">
    <location>
        <begin position="6"/>
        <end position="12"/>
    </location>
</feature>
<feature type="helix" evidence="2">
    <location>
        <begin position="14"/>
        <end position="17"/>
    </location>
</feature>
<feature type="strand" evidence="2">
    <location>
        <begin position="20"/>
        <end position="24"/>
    </location>
</feature>
<feature type="helix" evidence="2">
    <location>
        <begin position="27"/>
        <end position="41"/>
    </location>
</feature>
<feature type="turn" evidence="2">
    <location>
        <begin position="42"/>
        <end position="44"/>
    </location>
</feature>
<feature type="strand" evidence="2">
    <location>
        <begin position="46"/>
        <end position="51"/>
    </location>
</feature>
<feature type="turn" evidence="2">
    <location>
        <begin position="54"/>
        <end position="56"/>
    </location>
</feature>
<feature type="helix" evidence="2">
    <location>
        <begin position="59"/>
        <end position="65"/>
    </location>
</feature>
<feature type="helix" evidence="2">
    <location>
        <begin position="69"/>
        <end position="92"/>
    </location>
</feature>
<feature type="turn" evidence="2">
    <location>
        <begin position="93"/>
        <end position="95"/>
    </location>
</feature>
<feature type="strand" evidence="2">
    <location>
        <begin position="98"/>
        <end position="104"/>
    </location>
</feature>
<feature type="turn" evidence="2">
    <location>
        <begin position="107"/>
        <end position="109"/>
    </location>
</feature>
<feature type="strand" evidence="2">
    <location>
        <begin position="110"/>
        <end position="112"/>
    </location>
</feature>
<feature type="helix" evidence="2">
    <location>
        <begin position="115"/>
        <end position="123"/>
    </location>
</feature>
<feature type="strand" evidence="2">
    <location>
        <begin position="127"/>
        <end position="132"/>
    </location>
</feature>
<feature type="helix" evidence="2">
    <location>
        <begin position="141"/>
        <end position="151"/>
    </location>
</feature>
<feature type="strand" evidence="2">
    <location>
        <begin position="155"/>
        <end position="163"/>
    </location>
</feature>
<feature type="strand" evidence="2">
    <location>
        <begin position="168"/>
        <end position="170"/>
    </location>
</feature>
<feature type="turn" evidence="2">
    <location>
        <begin position="172"/>
        <end position="174"/>
    </location>
</feature>
<feature type="strand" evidence="2">
    <location>
        <begin position="182"/>
        <end position="185"/>
    </location>
</feature>
<feature type="helix" evidence="2">
    <location>
        <begin position="186"/>
        <end position="190"/>
    </location>
</feature>
<feature type="turn" evidence="2">
    <location>
        <begin position="191"/>
        <end position="193"/>
    </location>
</feature>
<feature type="helix" evidence="2">
    <location>
        <begin position="199"/>
        <end position="207"/>
    </location>
</feature>
<feature type="strand" evidence="2">
    <location>
        <begin position="211"/>
        <end position="216"/>
    </location>
</feature>
<feature type="helix" evidence="2">
    <location>
        <begin position="222"/>
        <end position="227"/>
    </location>
</feature>
<feature type="strand" evidence="2">
    <location>
        <begin position="233"/>
        <end position="237"/>
    </location>
</feature>
<gene>
    <name evidence="1" type="primary">pyrH</name>
    <name type="ordered locus">SPy_0462</name>
    <name type="ordered locus">M5005_Spy0377</name>
    <name type="ORF">M5005_Spy0378</name>
    <name type="ORF">M5005_Spy0379</name>
</gene>
<comment type="function">
    <text evidence="1">Catalyzes the reversible phosphorylation of UMP to UDP.</text>
</comment>
<comment type="catalytic activity">
    <reaction evidence="1">
        <text>UMP + ATP = UDP + ADP</text>
        <dbReference type="Rhea" id="RHEA:24400"/>
        <dbReference type="ChEBI" id="CHEBI:30616"/>
        <dbReference type="ChEBI" id="CHEBI:57865"/>
        <dbReference type="ChEBI" id="CHEBI:58223"/>
        <dbReference type="ChEBI" id="CHEBI:456216"/>
        <dbReference type="EC" id="2.7.4.22"/>
    </reaction>
</comment>
<comment type="activity regulation">
    <text evidence="1">Allosterically activated by GTP. Inhibited by UTP.</text>
</comment>
<comment type="pathway">
    <text evidence="1">Pyrimidine metabolism; CTP biosynthesis via de novo pathway; UDP from UMP (UMPK route): step 1/1.</text>
</comment>
<comment type="subunit">
    <text evidence="1">Homohexamer.</text>
</comment>
<comment type="subcellular location">
    <subcellularLocation>
        <location evidence="1">Cytoplasm</location>
    </subcellularLocation>
</comment>
<comment type="similarity">
    <text evidence="1">Belongs to the UMP kinase family.</text>
</comment>
<organism>
    <name type="scientific">Streptococcus pyogenes serotype M1</name>
    <dbReference type="NCBI Taxonomy" id="301447"/>
    <lineage>
        <taxon>Bacteria</taxon>
        <taxon>Bacillati</taxon>
        <taxon>Bacillota</taxon>
        <taxon>Bacilli</taxon>
        <taxon>Lactobacillales</taxon>
        <taxon>Streptococcaceae</taxon>
        <taxon>Streptococcus</taxon>
    </lineage>
</organism>
<keyword id="KW-0002">3D-structure</keyword>
<keyword id="KW-0021">Allosteric enzyme</keyword>
<keyword id="KW-0067">ATP-binding</keyword>
<keyword id="KW-0963">Cytoplasm</keyword>
<keyword id="KW-0418">Kinase</keyword>
<keyword id="KW-0547">Nucleotide-binding</keyword>
<keyword id="KW-0665">Pyrimidine biosynthesis</keyword>
<keyword id="KW-1185">Reference proteome</keyword>
<keyword id="KW-0808">Transferase</keyword>